<gene>
    <name evidence="5" type="primary">BG1</name>
    <name evidence="6" type="ordered locus">At3g57270</name>
    <name evidence="7" type="ORF">F28O9.120</name>
</gene>
<name>BG1_ARATH</name>
<protein>
    <recommendedName>
        <fullName evidence="5">Probable glucan endo-1,3-beta-glucosidase BG1</fullName>
        <ecNumber evidence="5">3.2.1.39</ecNumber>
    </recommendedName>
    <alternativeName>
        <fullName evidence="5">Beta-1,3-glucanase 1</fullName>
        <shortName evidence="5">AtBG1</shortName>
    </alternativeName>
</protein>
<accession>Q9M2M0</accession>
<accession>A0MF30</accession>
<accession>Q8LG04</accession>
<sequence>MDLRFLASLTLLLGLFFVNTNPTGGQVGVCYGRNGNNLPSPAETIALFKQKNIQRVRLYSPDHDVLAALRGSNIEVTLGLPNSYLQSVASSQSQANAWVQTYVMNYANGVRFRYISVGNEVKISDSYAQFLVPAMENIDRAVLAAGLGGRIKVSTSVDMGVLRESYPPSKGSFRGDVMVVMEPIIRFLVSKNSPLLLNLYTYFSYAGNVGQIRLDYALFTAPSGIVSDPPRSYQNLFDAMLDAMYSALEKSGGASLEIVVAETGWPTGGGTDTNIENARIYNNNLIKHVKNGTPKRPGKEIETYLFAIYDENQKPTPPYVEKFWGLFYPNKQPKYDINFY</sequence>
<proteinExistence type="evidence at transcript level"/>
<keyword id="KW-0326">Glycosidase</keyword>
<keyword id="KW-0378">Hydrolase</keyword>
<keyword id="KW-0611">Plant defense</keyword>
<keyword id="KW-1185">Reference proteome</keyword>
<keyword id="KW-0964">Secreted</keyword>
<keyword id="KW-0732">Signal</keyword>
<comment type="function">
    <text evidence="1">May play a role in plant defense against pathogens.</text>
</comment>
<comment type="catalytic activity">
    <reaction evidence="5">
        <text>Hydrolysis of (1-&gt;3)-beta-D-glucosidic linkages in (1-&gt;3)-beta-D-glucans.</text>
        <dbReference type="EC" id="3.2.1.39"/>
    </reaction>
</comment>
<comment type="subcellular location">
    <subcellularLocation>
        <location evidence="3">Secreted</location>
    </subcellularLocation>
</comment>
<comment type="similarity">
    <text evidence="5">Belongs to the glycosyl hydrolase 17 family.</text>
</comment>
<comment type="sequence caution" evidence="5">
    <conflict type="erroneous termination">
        <sequence resource="EMBL-CDS" id="ABK28605"/>
    </conflict>
    <text>Extended C-terminus.</text>
</comment>
<dbReference type="EC" id="3.2.1.39" evidence="5"/>
<dbReference type="EMBL" id="AL137080">
    <property type="protein sequence ID" value="CAB68133.1"/>
    <property type="molecule type" value="Genomic_DNA"/>
</dbReference>
<dbReference type="EMBL" id="CP002686">
    <property type="protein sequence ID" value="AEE79634.1"/>
    <property type="molecule type" value="Genomic_DNA"/>
</dbReference>
<dbReference type="EMBL" id="DQ446773">
    <property type="protein sequence ID" value="ABE66024.1"/>
    <property type="molecule type" value="mRNA"/>
</dbReference>
<dbReference type="EMBL" id="DQ653155">
    <property type="protein sequence ID" value="ABK28605.1"/>
    <property type="status" value="ALT_SEQ"/>
    <property type="molecule type" value="mRNA"/>
</dbReference>
<dbReference type="EMBL" id="AY084537">
    <property type="protein sequence ID" value="AAM61105.1"/>
    <property type="molecule type" value="mRNA"/>
</dbReference>
<dbReference type="PIR" id="T45805">
    <property type="entry name" value="T45805"/>
</dbReference>
<dbReference type="RefSeq" id="NP_191286.1">
    <property type="nucleotide sequence ID" value="NM_115587.2"/>
</dbReference>
<dbReference type="SMR" id="Q9M2M0"/>
<dbReference type="FunCoup" id="Q9M2M0">
    <property type="interactions" value="72"/>
</dbReference>
<dbReference type="STRING" id="3702.Q9M2M0"/>
<dbReference type="CAZy" id="GH17">
    <property type="family name" value="Glycoside Hydrolase Family 17"/>
</dbReference>
<dbReference type="SwissPalm" id="Q9M2M0"/>
<dbReference type="PaxDb" id="3702-AT3G57270.1"/>
<dbReference type="ProteomicsDB" id="240822"/>
<dbReference type="EnsemblPlants" id="AT3G57270.1">
    <property type="protein sequence ID" value="AT3G57270.1"/>
    <property type="gene ID" value="AT3G57270"/>
</dbReference>
<dbReference type="GeneID" id="824894"/>
<dbReference type="Gramene" id="AT3G57270.1">
    <property type="protein sequence ID" value="AT3G57270.1"/>
    <property type="gene ID" value="AT3G57270"/>
</dbReference>
<dbReference type="KEGG" id="ath:AT3G57270"/>
<dbReference type="Araport" id="AT3G57270"/>
<dbReference type="TAIR" id="AT3G57270">
    <property type="gene designation" value="BG1"/>
</dbReference>
<dbReference type="eggNOG" id="ENOG502QQ3M">
    <property type="taxonomic scope" value="Eukaryota"/>
</dbReference>
<dbReference type="HOGENOM" id="CLU_024953_0_0_1"/>
<dbReference type="InParanoid" id="Q9M2M0"/>
<dbReference type="OMA" id="MMDAFYA"/>
<dbReference type="PhylomeDB" id="Q9M2M0"/>
<dbReference type="BioCyc" id="ARA:AT3G57270-MONOMER"/>
<dbReference type="PRO" id="PR:Q9M2M0"/>
<dbReference type="Proteomes" id="UP000006548">
    <property type="component" value="Chromosome 3"/>
</dbReference>
<dbReference type="ExpressionAtlas" id="Q9M2M0">
    <property type="expression patterns" value="baseline and differential"/>
</dbReference>
<dbReference type="GO" id="GO:0005576">
    <property type="term" value="C:extracellular region"/>
    <property type="evidence" value="ECO:0007669"/>
    <property type="project" value="UniProtKB-SubCell"/>
</dbReference>
<dbReference type="GO" id="GO:0042973">
    <property type="term" value="F:glucan endo-1,3-beta-D-glucosidase activity"/>
    <property type="evidence" value="ECO:0007669"/>
    <property type="project" value="UniProtKB-EC"/>
</dbReference>
<dbReference type="GO" id="GO:0005975">
    <property type="term" value="P:carbohydrate metabolic process"/>
    <property type="evidence" value="ECO:0007669"/>
    <property type="project" value="InterPro"/>
</dbReference>
<dbReference type="GO" id="GO:0006952">
    <property type="term" value="P:defense response"/>
    <property type="evidence" value="ECO:0007669"/>
    <property type="project" value="UniProtKB-KW"/>
</dbReference>
<dbReference type="FunFam" id="3.20.20.80:FF:000010">
    <property type="entry name" value="glucan endo-1,3-beta-glucosidase, basic"/>
    <property type="match status" value="1"/>
</dbReference>
<dbReference type="Gene3D" id="3.20.20.80">
    <property type="entry name" value="Glycosidases"/>
    <property type="match status" value="1"/>
</dbReference>
<dbReference type="InterPro" id="IPR000490">
    <property type="entry name" value="Glyco_hydro_17"/>
</dbReference>
<dbReference type="InterPro" id="IPR044965">
    <property type="entry name" value="Glyco_hydro_17_plant"/>
</dbReference>
<dbReference type="InterPro" id="IPR017853">
    <property type="entry name" value="Glycoside_hydrolase_SF"/>
</dbReference>
<dbReference type="PANTHER" id="PTHR32227">
    <property type="entry name" value="GLUCAN ENDO-1,3-BETA-GLUCOSIDASE BG1-RELATED-RELATED"/>
    <property type="match status" value="1"/>
</dbReference>
<dbReference type="Pfam" id="PF00332">
    <property type="entry name" value="Glyco_hydro_17"/>
    <property type="match status" value="1"/>
</dbReference>
<dbReference type="SUPFAM" id="SSF51445">
    <property type="entry name" value="(Trans)glycosidases"/>
    <property type="match status" value="1"/>
</dbReference>
<dbReference type="PROSITE" id="PS00587">
    <property type="entry name" value="GLYCOSYL_HYDROL_F17"/>
    <property type="match status" value="1"/>
</dbReference>
<organism>
    <name type="scientific">Arabidopsis thaliana</name>
    <name type="common">Mouse-ear cress</name>
    <dbReference type="NCBI Taxonomy" id="3702"/>
    <lineage>
        <taxon>Eukaryota</taxon>
        <taxon>Viridiplantae</taxon>
        <taxon>Streptophyta</taxon>
        <taxon>Embryophyta</taxon>
        <taxon>Tracheophyta</taxon>
        <taxon>Spermatophyta</taxon>
        <taxon>Magnoliopsida</taxon>
        <taxon>eudicotyledons</taxon>
        <taxon>Gunneridae</taxon>
        <taxon>Pentapetalae</taxon>
        <taxon>rosids</taxon>
        <taxon>malvids</taxon>
        <taxon>Brassicales</taxon>
        <taxon>Brassicaceae</taxon>
        <taxon>Camelineae</taxon>
        <taxon>Arabidopsis</taxon>
    </lineage>
</organism>
<reference key="1">
    <citation type="journal article" date="2000" name="Nature">
        <title>Sequence and analysis of chromosome 3 of the plant Arabidopsis thaliana.</title>
        <authorList>
            <person name="Salanoubat M."/>
            <person name="Lemcke K."/>
            <person name="Rieger M."/>
            <person name="Ansorge W."/>
            <person name="Unseld M."/>
            <person name="Fartmann B."/>
            <person name="Valle G."/>
            <person name="Bloecker H."/>
            <person name="Perez-Alonso M."/>
            <person name="Obermaier B."/>
            <person name="Delseny M."/>
            <person name="Boutry M."/>
            <person name="Grivell L.A."/>
            <person name="Mache R."/>
            <person name="Puigdomenech P."/>
            <person name="De Simone V."/>
            <person name="Choisne N."/>
            <person name="Artiguenave F."/>
            <person name="Robert C."/>
            <person name="Brottier P."/>
            <person name="Wincker P."/>
            <person name="Cattolico L."/>
            <person name="Weissenbach J."/>
            <person name="Saurin W."/>
            <person name="Quetier F."/>
            <person name="Schaefer M."/>
            <person name="Mueller-Auer S."/>
            <person name="Gabel C."/>
            <person name="Fuchs M."/>
            <person name="Benes V."/>
            <person name="Wurmbach E."/>
            <person name="Drzonek H."/>
            <person name="Erfle H."/>
            <person name="Jordan N."/>
            <person name="Bangert S."/>
            <person name="Wiedelmann R."/>
            <person name="Kranz H."/>
            <person name="Voss H."/>
            <person name="Holland R."/>
            <person name="Brandt P."/>
            <person name="Nyakatura G."/>
            <person name="Vezzi A."/>
            <person name="D'Angelo M."/>
            <person name="Pallavicini A."/>
            <person name="Toppo S."/>
            <person name="Simionati B."/>
            <person name="Conrad A."/>
            <person name="Hornischer K."/>
            <person name="Kauer G."/>
            <person name="Loehnert T.-H."/>
            <person name="Nordsiek G."/>
            <person name="Reichelt J."/>
            <person name="Scharfe M."/>
            <person name="Schoen O."/>
            <person name="Bargues M."/>
            <person name="Terol J."/>
            <person name="Climent J."/>
            <person name="Navarro P."/>
            <person name="Collado C."/>
            <person name="Perez-Perez A."/>
            <person name="Ottenwaelder B."/>
            <person name="Duchemin D."/>
            <person name="Cooke R."/>
            <person name="Laudie M."/>
            <person name="Berger-Llauro C."/>
            <person name="Purnelle B."/>
            <person name="Masuy D."/>
            <person name="de Haan M."/>
            <person name="Maarse A.C."/>
            <person name="Alcaraz J.-P."/>
            <person name="Cottet A."/>
            <person name="Casacuberta E."/>
            <person name="Monfort A."/>
            <person name="Argiriou A."/>
            <person name="Flores M."/>
            <person name="Liguori R."/>
            <person name="Vitale D."/>
            <person name="Mannhaupt G."/>
            <person name="Haase D."/>
            <person name="Schoof H."/>
            <person name="Rudd S."/>
            <person name="Zaccaria P."/>
            <person name="Mewes H.-W."/>
            <person name="Mayer K.F.X."/>
            <person name="Kaul S."/>
            <person name="Town C.D."/>
            <person name="Koo H.L."/>
            <person name="Tallon L.J."/>
            <person name="Jenkins J."/>
            <person name="Rooney T."/>
            <person name="Rizzo M."/>
            <person name="Walts A."/>
            <person name="Utterback T."/>
            <person name="Fujii C.Y."/>
            <person name="Shea T.P."/>
            <person name="Creasy T.H."/>
            <person name="Haas B."/>
            <person name="Maiti R."/>
            <person name="Wu D."/>
            <person name="Peterson J."/>
            <person name="Van Aken S."/>
            <person name="Pai G."/>
            <person name="Militscher J."/>
            <person name="Sellers P."/>
            <person name="Gill J.E."/>
            <person name="Feldblyum T.V."/>
            <person name="Preuss D."/>
            <person name="Lin X."/>
            <person name="Nierman W.C."/>
            <person name="Salzberg S.L."/>
            <person name="White O."/>
            <person name="Venter J.C."/>
            <person name="Fraser C.M."/>
            <person name="Kaneko T."/>
            <person name="Nakamura Y."/>
            <person name="Sato S."/>
            <person name="Kato T."/>
            <person name="Asamizu E."/>
            <person name="Sasamoto S."/>
            <person name="Kimura T."/>
            <person name="Idesawa K."/>
            <person name="Kawashima K."/>
            <person name="Kishida Y."/>
            <person name="Kiyokawa C."/>
            <person name="Kohara M."/>
            <person name="Matsumoto M."/>
            <person name="Matsuno A."/>
            <person name="Muraki A."/>
            <person name="Nakayama S."/>
            <person name="Nakazaki N."/>
            <person name="Shinpo S."/>
            <person name="Takeuchi C."/>
            <person name="Wada T."/>
            <person name="Watanabe A."/>
            <person name="Yamada M."/>
            <person name="Yasuda M."/>
            <person name="Tabata S."/>
        </authorList>
    </citation>
    <scope>NUCLEOTIDE SEQUENCE [LARGE SCALE GENOMIC DNA]</scope>
    <source>
        <strain>cv. Columbia</strain>
    </source>
</reference>
<reference key="2">
    <citation type="journal article" date="2017" name="Plant J.">
        <title>Araport11: a complete reannotation of the Arabidopsis thaliana reference genome.</title>
        <authorList>
            <person name="Cheng C.Y."/>
            <person name="Krishnakumar V."/>
            <person name="Chan A.P."/>
            <person name="Thibaud-Nissen F."/>
            <person name="Schobel S."/>
            <person name="Town C.D."/>
        </authorList>
    </citation>
    <scope>GENOME REANNOTATION</scope>
    <source>
        <strain>cv. Columbia</strain>
    </source>
</reference>
<reference key="3">
    <citation type="journal article" date="2006" name="Plant Biotechnol. J.">
        <title>Simultaneous high-throughput recombinational cloning of open reading frames in closed and open configurations.</title>
        <authorList>
            <person name="Underwood B.A."/>
            <person name="Vanderhaeghen R."/>
            <person name="Whitford R."/>
            <person name="Town C.D."/>
            <person name="Hilson P."/>
        </authorList>
    </citation>
    <scope>NUCLEOTIDE SEQUENCE [LARGE SCALE MRNA]</scope>
    <source>
        <strain>cv. Columbia</strain>
    </source>
</reference>
<reference key="4">
    <citation type="submission" date="2002-03" db="EMBL/GenBank/DDBJ databases">
        <title>Full-length cDNA from Arabidopsis thaliana.</title>
        <authorList>
            <person name="Brover V.V."/>
            <person name="Troukhan M.E."/>
            <person name="Alexandrov N.A."/>
            <person name="Lu Y.-P."/>
            <person name="Flavell R.B."/>
            <person name="Feldmann K.A."/>
        </authorList>
    </citation>
    <scope>NUCLEOTIDE SEQUENCE [LARGE SCALE MRNA]</scope>
</reference>
<feature type="signal peptide" evidence="4">
    <location>
        <begin position="1"/>
        <end position="25"/>
    </location>
</feature>
<feature type="chain" id="PRO_0000434696" description="Probable glucan endo-1,3-beta-glucosidase BG1" evidence="4">
    <location>
        <begin position="26"/>
        <end position="340"/>
    </location>
</feature>
<feature type="active site" description="Proton donor" evidence="2">
    <location>
        <position position="120"/>
    </location>
</feature>
<feature type="active site" description="Nucleophile" evidence="2">
    <location>
        <position position="262"/>
    </location>
</feature>
<feature type="sequence conflict" description="In Ref. 4; AAM61105." evidence="5" ref="4">
    <original>G</original>
    <variation>V</variation>
    <location>
        <position position="24"/>
    </location>
</feature>
<feature type="sequence conflict" description="In Ref. 4; AAM61105." evidence="5" ref="4">
    <original>R</original>
    <variation>G</variation>
    <location>
        <position position="163"/>
    </location>
</feature>
<feature type="sequence conflict" description="In Ref. 4; AAM61105." evidence="5" ref="4">
    <original>V</original>
    <variation>I</variation>
    <location>
        <position position="209"/>
    </location>
</feature>
<feature type="sequence conflict" description="In Ref. 4; AAM61105." evidence="5" ref="4">
    <original>S</original>
    <variation>F</variation>
    <location>
        <position position="251"/>
    </location>
</feature>
<feature type="sequence conflict" description="In Ref. 4; AAM61105." evidence="5" ref="4">
    <original>T</original>
    <variation>V</variation>
    <location>
        <position position="271"/>
    </location>
</feature>
<evidence type="ECO:0000250" key="1">
    <source>
        <dbReference type="UniProtKB" id="F4J270"/>
    </source>
</evidence>
<evidence type="ECO:0000250" key="2">
    <source>
        <dbReference type="UniProtKB" id="O22317"/>
    </source>
</evidence>
<evidence type="ECO:0000250" key="3">
    <source>
        <dbReference type="UniProtKB" id="P33157"/>
    </source>
</evidence>
<evidence type="ECO:0000255" key="4"/>
<evidence type="ECO:0000305" key="5"/>
<evidence type="ECO:0000312" key="6">
    <source>
        <dbReference type="Araport" id="AT3G57270"/>
    </source>
</evidence>
<evidence type="ECO:0000312" key="7">
    <source>
        <dbReference type="EMBL" id="CAB68133.1"/>
    </source>
</evidence>